<sequence>MAHRPRWTLSQVTELFEKPLLDLLFEAQQVHRQHFDPRQVQVSTLLSIKTGACPEDCKYCPQSSRYKTGLEAERLMEVEQVLESARKAKAAGSTRFCMGAAWKNPHERDMPYLEQMVQGVKAMGLEACMTLGTLSESQAQRLANAGLDYYNHNLDTSPEFYGNIITTRTYQERLDTLEKVRDAGIKVCSGGIVGLGETVKDRAGLLLQLANLPTPPESVPINMLVKVKGTPLADNDDVDAFDFIRTIAVARIMMPTSYVRLSAGREQMNEQTQAMCFMAGANSIFYGCKLLTTPNPEEDKDLQLFRKLGLNPQQTAVLAGDNEQQQRLEQALMTPDTDEYYNAAAL</sequence>
<proteinExistence type="inferred from homology"/>
<gene>
    <name evidence="1" type="primary">bioB</name>
    <name type="ordered locus">SSON_0754</name>
</gene>
<organism>
    <name type="scientific">Shigella sonnei (strain Ss046)</name>
    <dbReference type="NCBI Taxonomy" id="300269"/>
    <lineage>
        <taxon>Bacteria</taxon>
        <taxon>Pseudomonadati</taxon>
        <taxon>Pseudomonadota</taxon>
        <taxon>Gammaproteobacteria</taxon>
        <taxon>Enterobacterales</taxon>
        <taxon>Enterobacteriaceae</taxon>
        <taxon>Shigella</taxon>
    </lineage>
</organism>
<accession>Q3Z409</accession>
<feature type="chain" id="PRO_0000381636" description="Biotin synthase">
    <location>
        <begin position="1"/>
        <end position="346"/>
    </location>
</feature>
<feature type="domain" description="Radical SAM core" evidence="2">
    <location>
        <begin position="38"/>
        <end position="256"/>
    </location>
</feature>
<feature type="binding site" evidence="1">
    <location>
        <position position="53"/>
    </location>
    <ligand>
        <name>[4Fe-4S] cluster</name>
        <dbReference type="ChEBI" id="CHEBI:49883"/>
        <note>4Fe-4S-S-AdoMet</note>
    </ligand>
</feature>
<feature type="binding site" evidence="1">
    <location>
        <position position="57"/>
    </location>
    <ligand>
        <name>[4Fe-4S] cluster</name>
        <dbReference type="ChEBI" id="CHEBI:49883"/>
        <note>4Fe-4S-S-AdoMet</note>
    </ligand>
</feature>
<feature type="binding site" evidence="1">
    <location>
        <position position="60"/>
    </location>
    <ligand>
        <name>[4Fe-4S] cluster</name>
        <dbReference type="ChEBI" id="CHEBI:49883"/>
        <note>4Fe-4S-S-AdoMet</note>
    </ligand>
</feature>
<feature type="binding site" evidence="1">
    <location>
        <position position="97"/>
    </location>
    <ligand>
        <name>[2Fe-2S] cluster</name>
        <dbReference type="ChEBI" id="CHEBI:190135"/>
    </ligand>
</feature>
<feature type="binding site" evidence="1">
    <location>
        <position position="128"/>
    </location>
    <ligand>
        <name>[2Fe-2S] cluster</name>
        <dbReference type="ChEBI" id="CHEBI:190135"/>
    </ligand>
</feature>
<feature type="binding site" evidence="1">
    <location>
        <position position="188"/>
    </location>
    <ligand>
        <name>[2Fe-2S] cluster</name>
        <dbReference type="ChEBI" id="CHEBI:190135"/>
    </ligand>
</feature>
<feature type="binding site" evidence="1">
    <location>
        <position position="260"/>
    </location>
    <ligand>
        <name>[2Fe-2S] cluster</name>
        <dbReference type="ChEBI" id="CHEBI:190135"/>
    </ligand>
</feature>
<protein>
    <recommendedName>
        <fullName evidence="1">Biotin synthase</fullName>
        <ecNumber evidence="1">2.8.1.6</ecNumber>
    </recommendedName>
</protein>
<reference key="1">
    <citation type="journal article" date="2005" name="Nucleic Acids Res.">
        <title>Genome dynamics and diversity of Shigella species, the etiologic agents of bacillary dysentery.</title>
        <authorList>
            <person name="Yang F."/>
            <person name="Yang J."/>
            <person name="Zhang X."/>
            <person name="Chen L."/>
            <person name="Jiang Y."/>
            <person name="Yan Y."/>
            <person name="Tang X."/>
            <person name="Wang J."/>
            <person name="Xiong Z."/>
            <person name="Dong J."/>
            <person name="Xue Y."/>
            <person name="Zhu Y."/>
            <person name="Xu X."/>
            <person name="Sun L."/>
            <person name="Chen S."/>
            <person name="Nie H."/>
            <person name="Peng J."/>
            <person name="Xu J."/>
            <person name="Wang Y."/>
            <person name="Yuan Z."/>
            <person name="Wen Y."/>
            <person name="Yao Z."/>
            <person name="Shen Y."/>
            <person name="Qiang B."/>
            <person name="Hou Y."/>
            <person name="Yu J."/>
            <person name="Jin Q."/>
        </authorList>
    </citation>
    <scope>NUCLEOTIDE SEQUENCE [LARGE SCALE GENOMIC DNA]</scope>
    <source>
        <strain>Ss046</strain>
    </source>
</reference>
<evidence type="ECO:0000255" key="1">
    <source>
        <dbReference type="HAMAP-Rule" id="MF_01694"/>
    </source>
</evidence>
<evidence type="ECO:0000255" key="2">
    <source>
        <dbReference type="PROSITE-ProRule" id="PRU01266"/>
    </source>
</evidence>
<keyword id="KW-0001">2Fe-2S</keyword>
<keyword id="KW-0004">4Fe-4S</keyword>
<keyword id="KW-0093">Biotin biosynthesis</keyword>
<keyword id="KW-0408">Iron</keyword>
<keyword id="KW-0411">Iron-sulfur</keyword>
<keyword id="KW-0479">Metal-binding</keyword>
<keyword id="KW-1185">Reference proteome</keyword>
<keyword id="KW-0949">S-adenosyl-L-methionine</keyword>
<keyword id="KW-0808">Transferase</keyword>
<dbReference type="EC" id="2.8.1.6" evidence="1"/>
<dbReference type="EMBL" id="CP000038">
    <property type="protein sequence ID" value="AAZ87503.1"/>
    <property type="molecule type" value="Genomic_DNA"/>
</dbReference>
<dbReference type="RefSeq" id="WP_000951213.1">
    <property type="nucleotide sequence ID" value="NC_007384.1"/>
</dbReference>
<dbReference type="SMR" id="Q3Z409"/>
<dbReference type="GeneID" id="93776655"/>
<dbReference type="KEGG" id="ssn:SSON_0754"/>
<dbReference type="HOGENOM" id="CLU_033172_1_2_6"/>
<dbReference type="UniPathway" id="UPA00078">
    <property type="reaction ID" value="UER00162"/>
</dbReference>
<dbReference type="Proteomes" id="UP000002529">
    <property type="component" value="Chromosome"/>
</dbReference>
<dbReference type="GO" id="GO:0051537">
    <property type="term" value="F:2 iron, 2 sulfur cluster binding"/>
    <property type="evidence" value="ECO:0007669"/>
    <property type="project" value="UniProtKB-KW"/>
</dbReference>
<dbReference type="GO" id="GO:0051539">
    <property type="term" value="F:4 iron, 4 sulfur cluster binding"/>
    <property type="evidence" value="ECO:0007669"/>
    <property type="project" value="UniProtKB-KW"/>
</dbReference>
<dbReference type="GO" id="GO:0004076">
    <property type="term" value="F:biotin synthase activity"/>
    <property type="evidence" value="ECO:0007669"/>
    <property type="project" value="UniProtKB-UniRule"/>
</dbReference>
<dbReference type="GO" id="GO:0005506">
    <property type="term" value="F:iron ion binding"/>
    <property type="evidence" value="ECO:0007669"/>
    <property type="project" value="UniProtKB-UniRule"/>
</dbReference>
<dbReference type="GO" id="GO:0009102">
    <property type="term" value="P:biotin biosynthetic process"/>
    <property type="evidence" value="ECO:0007669"/>
    <property type="project" value="UniProtKB-UniRule"/>
</dbReference>
<dbReference type="CDD" id="cd01335">
    <property type="entry name" value="Radical_SAM"/>
    <property type="match status" value="1"/>
</dbReference>
<dbReference type="FunFam" id="3.20.20.70:FF:000011">
    <property type="entry name" value="Biotin synthase"/>
    <property type="match status" value="1"/>
</dbReference>
<dbReference type="Gene3D" id="3.20.20.70">
    <property type="entry name" value="Aldolase class I"/>
    <property type="match status" value="1"/>
</dbReference>
<dbReference type="HAMAP" id="MF_01694">
    <property type="entry name" value="BioB"/>
    <property type="match status" value="1"/>
</dbReference>
<dbReference type="InterPro" id="IPR013785">
    <property type="entry name" value="Aldolase_TIM"/>
</dbReference>
<dbReference type="InterPro" id="IPR010722">
    <property type="entry name" value="BATS_dom"/>
</dbReference>
<dbReference type="InterPro" id="IPR002684">
    <property type="entry name" value="Biotin_synth/BioAB"/>
</dbReference>
<dbReference type="InterPro" id="IPR024177">
    <property type="entry name" value="Biotin_synthase"/>
</dbReference>
<dbReference type="InterPro" id="IPR006638">
    <property type="entry name" value="Elp3/MiaA/NifB-like_rSAM"/>
</dbReference>
<dbReference type="InterPro" id="IPR007197">
    <property type="entry name" value="rSAM"/>
</dbReference>
<dbReference type="NCBIfam" id="TIGR00433">
    <property type="entry name" value="bioB"/>
    <property type="match status" value="1"/>
</dbReference>
<dbReference type="PANTHER" id="PTHR22976">
    <property type="entry name" value="BIOTIN SYNTHASE"/>
    <property type="match status" value="1"/>
</dbReference>
<dbReference type="PANTHER" id="PTHR22976:SF2">
    <property type="entry name" value="BIOTIN SYNTHASE, MITOCHONDRIAL"/>
    <property type="match status" value="1"/>
</dbReference>
<dbReference type="Pfam" id="PF06968">
    <property type="entry name" value="BATS"/>
    <property type="match status" value="1"/>
</dbReference>
<dbReference type="Pfam" id="PF04055">
    <property type="entry name" value="Radical_SAM"/>
    <property type="match status" value="1"/>
</dbReference>
<dbReference type="PIRSF" id="PIRSF001619">
    <property type="entry name" value="Biotin_synth"/>
    <property type="match status" value="1"/>
</dbReference>
<dbReference type="SFLD" id="SFLDG01060">
    <property type="entry name" value="BATS_domain_containing"/>
    <property type="match status" value="1"/>
</dbReference>
<dbReference type="SFLD" id="SFLDF00272">
    <property type="entry name" value="biotin_synthase"/>
    <property type="match status" value="1"/>
</dbReference>
<dbReference type="SMART" id="SM00876">
    <property type="entry name" value="BATS"/>
    <property type="match status" value="1"/>
</dbReference>
<dbReference type="SMART" id="SM00729">
    <property type="entry name" value="Elp3"/>
    <property type="match status" value="1"/>
</dbReference>
<dbReference type="SUPFAM" id="SSF102114">
    <property type="entry name" value="Radical SAM enzymes"/>
    <property type="match status" value="1"/>
</dbReference>
<dbReference type="PROSITE" id="PS51918">
    <property type="entry name" value="RADICAL_SAM"/>
    <property type="match status" value="1"/>
</dbReference>
<comment type="function">
    <text evidence="1">Catalyzes the conversion of dethiobiotin (DTB) to biotin by the insertion of a sulfur atom into dethiobiotin via a radical-based mechanism.</text>
</comment>
<comment type="catalytic activity">
    <reaction evidence="1">
        <text>(4R,5S)-dethiobiotin + (sulfur carrier)-SH + 2 reduced [2Fe-2S]-[ferredoxin] + 2 S-adenosyl-L-methionine = (sulfur carrier)-H + biotin + 2 5'-deoxyadenosine + 2 L-methionine + 2 oxidized [2Fe-2S]-[ferredoxin]</text>
        <dbReference type="Rhea" id="RHEA:22060"/>
        <dbReference type="Rhea" id="RHEA-COMP:10000"/>
        <dbReference type="Rhea" id="RHEA-COMP:10001"/>
        <dbReference type="Rhea" id="RHEA-COMP:14737"/>
        <dbReference type="Rhea" id="RHEA-COMP:14739"/>
        <dbReference type="ChEBI" id="CHEBI:17319"/>
        <dbReference type="ChEBI" id="CHEBI:29917"/>
        <dbReference type="ChEBI" id="CHEBI:33737"/>
        <dbReference type="ChEBI" id="CHEBI:33738"/>
        <dbReference type="ChEBI" id="CHEBI:57586"/>
        <dbReference type="ChEBI" id="CHEBI:57844"/>
        <dbReference type="ChEBI" id="CHEBI:59789"/>
        <dbReference type="ChEBI" id="CHEBI:64428"/>
        <dbReference type="ChEBI" id="CHEBI:149473"/>
        <dbReference type="EC" id="2.8.1.6"/>
    </reaction>
</comment>
<comment type="cofactor">
    <cofactor evidence="1">
        <name>[4Fe-4S] cluster</name>
        <dbReference type="ChEBI" id="CHEBI:49883"/>
    </cofactor>
    <text evidence="1">Binds 1 [4Fe-4S] cluster. The cluster is coordinated with 3 cysteines and an exchangeable S-adenosyl-L-methionine.</text>
</comment>
<comment type="cofactor">
    <cofactor evidence="1">
        <name>[2Fe-2S] cluster</name>
        <dbReference type="ChEBI" id="CHEBI:190135"/>
    </cofactor>
    <text evidence="1">Binds 1 [2Fe-2S] cluster. The cluster is coordinated with 3 cysteines and 1 arginine.</text>
</comment>
<comment type="pathway">
    <text evidence="1">Cofactor biosynthesis; biotin biosynthesis; biotin from 7,8-diaminononanoate: step 2/2.</text>
</comment>
<comment type="subunit">
    <text evidence="1">Homodimer.</text>
</comment>
<comment type="similarity">
    <text evidence="1">Belongs to the radical SAM superfamily. Biotin synthase family.</text>
</comment>
<name>BIOB_SHISS</name>